<accession>Q8DKK1</accession>
<sequence length="307" mass="33282">MKAGIIYNEGKPLAVELAAHVRRILELQGWEVHMATGIGGILGYSRPDSPVCHTPIDQLVPPGFDASMAFAVVLGGDGTVLSAFRQLAPCEIPLLTINTGHLGFLTEGYVADLEPALDQVLRGDYTIEDRTMLTVQVLRDQTVIWEALSLNEMVIHKEPLTGMCHFEVDVGAHARVDIAADGLILSTPTGSTAYALSAGGPVITPGVAALQLVPICPHSLASRALVFSNSEPVWIYPANPFKHLILVVDGNAGCYIQPEDQVFVQRAPYRARFIRLRAPEFFHVLQQKLGWGLPHVAKPRAKKSTDS</sequence>
<reference key="1">
    <citation type="journal article" date="2002" name="DNA Res.">
        <title>Complete genome structure of the thermophilic cyanobacterium Thermosynechococcus elongatus BP-1.</title>
        <authorList>
            <person name="Nakamura Y."/>
            <person name="Kaneko T."/>
            <person name="Sato S."/>
            <person name="Ikeuchi M."/>
            <person name="Katoh H."/>
            <person name="Sasamoto S."/>
            <person name="Watanabe A."/>
            <person name="Iriguchi M."/>
            <person name="Kawashima K."/>
            <person name="Kimura T."/>
            <person name="Kishida Y."/>
            <person name="Kiyokawa C."/>
            <person name="Kohara M."/>
            <person name="Matsumoto M."/>
            <person name="Matsuno A."/>
            <person name="Nakazaki N."/>
            <person name="Shimpo S."/>
            <person name="Sugimoto M."/>
            <person name="Takeuchi C."/>
            <person name="Yamada M."/>
            <person name="Tabata S."/>
        </authorList>
    </citation>
    <scope>NUCLEOTIDE SEQUENCE [LARGE SCALE GENOMIC DNA]</scope>
    <source>
        <strain>NIES-2133 / IAM M-273 / BP-1</strain>
    </source>
</reference>
<evidence type="ECO:0000255" key="1">
    <source>
        <dbReference type="HAMAP-Rule" id="MF_00361"/>
    </source>
</evidence>
<organism>
    <name type="scientific">Thermosynechococcus vestitus (strain NIES-2133 / IAM M-273 / BP-1)</name>
    <dbReference type="NCBI Taxonomy" id="197221"/>
    <lineage>
        <taxon>Bacteria</taxon>
        <taxon>Bacillati</taxon>
        <taxon>Cyanobacteriota</taxon>
        <taxon>Cyanophyceae</taxon>
        <taxon>Acaryochloridales</taxon>
        <taxon>Thermosynechococcaceae</taxon>
        <taxon>Thermosynechococcus</taxon>
    </lineage>
</organism>
<name>NADK2_THEVB</name>
<keyword id="KW-0067">ATP-binding</keyword>
<keyword id="KW-0963">Cytoplasm</keyword>
<keyword id="KW-0418">Kinase</keyword>
<keyword id="KW-0520">NAD</keyword>
<keyword id="KW-0521">NADP</keyword>
<keyword id="KW-0547">Nucleotide-binding</keyword>
<keyword id="KW-1185">Reference proteome</keyword>
<keyword id="KW-0808">Transferase</keyword>
<dbReference type="EC" id="2.7.1.23" evidence="1"/>
<dbReference type="EMBL" id="BA000039">
    <property type="protein sequence ID" value="BAC08410.1"/>
    <property type="molecule type" value="Genomic_DNA"/>
</dbReference>
<dbReference type="RefSeq" id="NP_681648.1">
    <property type="nucleotide sequence ID" value="NC_004113.1"/>
</dbReference>
<dbReference type="RefSeq" id="WP_011056702.1">
    <property type="nucleotide sequence ID" value="NC_004113.1"/>
</dbReference>
<dbReference type="SMR" id="Q8DKK1"/>
<dbReference type="STRING" id="197221.gene:10747450"/>
<dbReference type="EnsemblBacteria" id="BAC08410">
    <property type="protein sequence ID" value="BAC08410"/>
    <property type="gene ID" value="BAC08410"/>
</dbReference>
<dbReference type="KEGG" id="tel:tll0858"/>
<dbReference type="PATRIC" id="fig|197221.4.peg.903"/>
<dbReference type="eggNOG" id="COG0061">
    <property type="taxonomic scope" value="Bacteria"/>
</dbReference>
<dbReference type="Proteomes" id="UP000000440">
    <property type="component" value="Chromosome"/>
</dbReference>
<dbReference type="GO" id="GO:0005737">
    <property type="term" value="C:cytoplasm"/>
    <property type="evidence" value="ECO:0007669"/>
    <property type="project" value="UniProtKB-SubCell"/>
</dbReference>
<dbReference type="GO" id="GO:0005524">
    <property type="term" value="F:ATP binding"/>
    <property type="evidence" value="ECO:0007669"/>
    <property type="project" value="UniProtKB-KW"/>
</dbReference>
<dbReference type="GO" id="GO:0046872">
    <property type="term" value="F:metal ion binding"/>
    <property type="evidence" value="ECO:0007669"/>
    <property type="project" value="UniProtKB-UniRule"/>
</dbReference>
<dbReference type="GO" id="GO:0051287">
    <property type="term" value="F:NAD binding"/>
    <property type="evidence" value="ECO:0007669"/>
    <property type="project" value="UniProtKB-ARBA"/>
</dbReference>
<dbReference type="GO" id="GO:0003951">
    <property type="term" value="F:NAD+ kinase activity"/>
    <property type="evidence" value="ECO:0007669"/>
    <property type="project" value="UniProtKB-UniRule"/>
</dbReference>
<dbReference type="GO" id="GO:0019674">
    <property type="term" value="P:NAD metabolic process"/>
    <property type="evidence" value="ECO:0007669"/>
    <property type="project" value="InterPro"/>
</dbReference>
<dbReference type="GO" id="GO:0006741">
    <property type="term" value="P:NADP biosynthetic process"/>
    <property type="evidence" value="ECO:0007669"/>
    <property type="project" value="UniProtKB-UniRule"/>
</dbReference>
<dbReference type="Gene3D" id="3.40.50.10330">
    <property type="entry name" value="Probable inorganic polyphosphate/atp-NAD kinase, domain 1"/>
    <property type="match status" value="1"/>
</dbReference>
<dbReference type="Gene3D" id="2.60.200.30">
    <property type="entry name" value="Probable inorganic polyphosphate/atp-NAD kinase, domain 2"/>
    <property type="match status" value="1"/>
</dbReference>
<dbReference type="HAMAP" id="MF_00361">
    <property type="entry name" value="NAD_kinase"/>
    <property type="match status" value="1"/>
</dbReference>
<dbReference type="InterPro" id="IPR017438">
    <property type="entry name" value="ATP-NAD_kinase_N"/>
</dbReference>
<dbReference type="InterPro" id="IPR017437">
    <property type="entry name" value="ATP-NAD_kinase_PpnK-typ_C"/>
</dbReference>
<dbReference type="InterPro" id="IPR016064">
    <property type="entry name" value="NAD/diacylglycerol_kinase_sf"/>
</dbReference>
<dbReference type="InterPro" id="IPR002504">
    <property type="entry name" value="NADK"/>
</dbReference>
<dbReference type="NCBIfam" id="NF002732">
    <property type="entry name" value="PRK02649.1"/>
    <property type="match status" value="1"/>
</dbReference>
<dbReference type="PANTHER" id="PTHR20275">
    <property type="entry name" value="NAD KINASE"/>
    <property type="match status" value="1"/>
</dbReference>
<dbReference type="PANTHER" id="PTHR20275:SF13">
    <property type="entry name" value="NAD KINASE 2"/>
    <property type="match status" value="1"/>
</dbReference>
<dbReference type="Pfam" id="PF01513">
    <property type="entry name" value="NAD_kinase"/>
    <property type="match status" value="1"/>
</dbReference>
<dbReference type="Pfam" id="PF20143">
    <property type="entry name" value="NAD_kinase_C"/>
    <property type="match status" value="1"/>
</dbReference>
<dbReference type="SUPFAM" id="SSF111331">
    <property type="entry name" value="NAD kinase/diacylglycerol kinase-like"/>
    <property type="match status" value="1"/>
</dbReference>
<gene>
    <name evidence="1" type="primary">nadK2</name>
    <name type="ordered locus">tll0858</name>
</gene>
<feature type="chain" id="PRO_0000120676" description="NAD kinase 2">
    <location>
        <begin position="1"/>
        <end position="307"/>
    </location>
</feature>
<feature type="active site" description="Proton acceptor" evidence="1">
    <location>
        <position position="77"/>
    </location>
</feature>
<feature type="binding site" evidence="1">
    <location>
        <begin position="77"/>
        <end position="78"/>
    </location>
    <ligand>
        <name>NAD(+)</name>
        <dbReference type="ChEBI" id="CHEBI:57540"/>
    </ligand>
</feature>
<feature type="binding site" evidence="1">
    <location>
        <begin position="151"/>
        <end position="152"/>
    </location>
    <ligand>
        <name>NAD(+)</name>
        <dbReference type="ChEBI" id="CHEBI:57540"/>
    </ligand>
</feature>
<feature type="binding site" evidence="1">
    <location>
        <position position="181"/>
    </location>
    <ligand>
        <name>NAD(+)</name>
        <dbReference type="ChEBI" id="CHEBI:57540"/>
    </ligand>
</feature>
<feature type="binding site" evidence="1">
    <location>
        <begin position="192"/>
        <end position="197"/>
    </location>
    <ligand>
        <name>NAD(+)</name>
        <dbReference type="ChEBI" id="CHEBI:57540"/>
    </ligand>
</feature>
<feature type="binding site" evidence="1">
    <location>
        <position position="251"/>
    </location>
    <ligand>
        <name>NAD(+)</name>
        <dbReference type="ChEBI" id="CHEBI:57540"/>
    </ligand>
</feature>
<protein>
    <recommendedName>
        <fullName evidence="1">NAD kinase 2</fullName>
        <ecNumber evidence="1">2.7.1.23</ecNumber>
    </recommendedName>
    <alternativeName>
        <fullName evidence="1">ATP-dependent NAD kinase 2</fullName>
    </alternativeName>
</protein>
<proteinExistence type="inferred from homology"/>
<comment type="function">
    <text evidence="1">Involved in the regulation of the intracellular balance of NAD and NADP, and is a key enzyme in the biosynthesis of NADP. Catalyzes specifically the phosphorylation on 2'-hydroxyl of the adenosine moiety of NAD to yield NADP.</text>
</comment>
<comment type="catalytic activity">
    <reaction evidence="1">
        <text>NAD(+) + ATP = ADP + NADP(+) + H(+)</text>
        <dbReference type="Rhea" id="RHEA:18629"/>
        <dbReference type="ChEBI" id="CHEBI:15378"/>
        <dbReference type="ChEBI" id="CHEBI:30616"/>
        <dbReference type="ChEBI" id="CHEBI:57540"/>
        <dbReference type="ChEBI" id="CHEBI:58349"/>
        <dbReference type="ChEBI" id="CHEBI:456216"/>
        <dbReference type="EC" id="2.7.1.23"/>
    </reaction>
</comment>
<comment type="cofactor">
    <cofactor evidence="1">
        <name>a divalent metal cation</name>
        <dbReference type="ChEBI" id="CHEBI:60240"/>
    </cofactor>
</comment>
<comment type="subcellular location">
    <subcellularLocation>
        <location evidence="1">Cytoplasm</location>
    </subcellularLocation>
</comment>
<comment type="similarity">
    <text evidence="1">Belongs to the NAD kinase family.</text>
</comment>